<comment type="function">
    <text evidence="1">This b-type cytochrome is tightly associated with the reaction center of photosystem II (PSII). PSII is a light-driven water:plastoquinone oxidoreductase that uses light energy to abstract electrons from H(2)O, generating O(2) and a proton gradient subsequently used for ATP formation. It consists of a core antenna complex that captures photons, and an electron transfer chain that converts photonic excitation into a charge separation.</text>
</comment>
<comment type="cofactor">
    <cofactor evidence="1">
        <name>heme b</name>
        <dbReference type="ChEBI" id="CHEBI:60344"/>
    </cofactor>
    <text evidence="1">With its partner (PsbF) binds heme. PSII binds additional chlorophylls, carotenoids and specific lipids.</text>
</comment>
<comment type="subunit">
    <text evidence="1">Heterodimer of an alpha subunit and a beta subunit. PSII is composed of 1 copy each of membrane proteins PsbA, PsbB, PsbC, PsbD, PsbE, PsbF, PsbH, PsbI, PsbJ, PsbK, PsbL, PsbM, PsbT, PsbX, PsbY, PsbZ, Psb30/Ycf12, peripheral proteins PsbO, CyanoQ (PsbQ), PsbU, PsbV and a large number of cofactors. It forms dimeric complexes.</text>
</comment>
<comment type="subcellular location">
    <subcellularLocation>
        <location evidence="1">Cellular thylakoid membrane</location>
        <topology evidence="1">Single-pass membrane protein</topology>
    </subcellularLocation>
</comment>
<comment type="similarity">
    <text evidence="1">Belongs to the PsbE/PsbF family.</text>
</comment>
<proteinExistence type="inferred from homology"/>
<protein>
    <recommendedName>
        <fullName evidence="1">Cytochrome b559 subunit alpha</fullName>
    </recommendedName>
    <alternativeName>
        <fullName evidence="1">PSII reaction center subunit V</fullName>
    </alternativeName>
</protein>
<sequence>MSGTTGERPFSDIVTSIRYWVIHSITIPALFIAGWLFVSTGLAYDVFGTPRPDEYYTQARQELPIVNNRFEAKKQVEQLIQK</sequence>
<gene>
    <name evidence="1" type="primary">psbE</name>
    <name type="ordered locus">Ava_1855</name>
</gene>
<reference key="1">
    <citation type="journal article" date="2014" name="Stand. Genomic Sci.">
        <title>Complete genome sequence of Anabaena variabilis ATCC 29413.</title>
        <authorList>
            <person name="Thiel T."/>
            <person name="Pratte B.S."/>
            <person name="Zhong J."/>
            <person name="Goodwin L."/>
            <person name="Copeland A."/>
            <person name="Lucas S."/>
            <person name="Han C."/>
            <person name="Pitluck S."/>
            <person name="Land M.L."/>
            <person name="Kyrpides N.C."/>
            <person name="Woyke T."/>
        </authorList>
    </citation>
    <scope>NUCLEOTIDE SEQUENCE [LARGE SCALE GENOMIC DNA]</scope>
    <source>
        <strain>ATCC 29413 / PCC 7937</strain>
    </source>
</reference>
<name>PSBE_TRIV2</name>
<keyword id="KW-0249">Electron transport</keyword>
<keyword id="KW-0349">Heme</keyword>
<keyword id="KW-0408">Iron</keyword>
<keyword id="KW-0472">Membrane</keyword>
<keyword id="KW-0479">Metal-binding</keyword>
<keyword id="KW-0602">Photosynthesis</keyword>
<keyword id="KW-0604">Photosystem II</keyword>
<keyword id="KW-0793">Thylakoid</keyword>
<keyword id="KW-0812">Transmembrane</keyword>
<keyword id="KW-1133">Transmembrane helix</keyword>
<keyword id="KW-0813">Transport</keyword>
<feature type="chain" id="PRO_0000233214" description="Cytochrome b559 subunit alpha">
    <location>
        <begin position="1"/>
        <end position="82"/>
    </location>
</feature>
<feature type="transmembrane region" description="Helical" evidence="1">
    <location>
        <begin position="21"/>
        <end position="35"/>
    </location>
</feature>
<feature type="binding site" description="axial binding residue" evidence="1">
    <location>
        <position position="23"/>
    </location>
    <ligand>
        <name>heme</name>
        <dbReference type="ChEBI" id="CHEBI:30413"/>
        <note>ligand shared with beta subunit</note>
    </ligand>
    <ligandPart>
        <name>Fe</name>
        <dbReference type="ChEBI" id="CHEBI:18248"/>
    </ligandPart>
</feature>
<accession>Q3MC09</accession>
<dbReference type="EMBL" id="CP000117">
    <property type="protein sequence ID" value="ABA21477.1"/>
    <property type="molecule type" value="Genomic_DNA"/>
</dbReference>
<dbReference type="RefSeq" id="WP_010997986.1">
    <property type="nucleotide sequence ID" value="NC_007413.1"/>
</dbReference>
<dbReference type="SMR" id="Q3MC09"/>
<dbReference type="STRING" id="240292.Ava_1855"/>
<dbReference type="GeneID" id="58724527"/>
<dbReference type="KEGG" id="ava:Ava_1855"/>
<dbReference type="eggNOG" id="ENOG5032RR6">
    <property type="taxonomic scope" value="Bacteria"/>
</dbReference>
<dbReference type="HOGENOM" id="CLU_194095_0_0_3"/>
<dbReference type="Proteomes" id="UP000002533">
    <property type="component" value="Chromosome"/>
</dbReference>
<dbReference type="GO" id="GO:0009539">
    <property type="term" value="C:photosystem II reaction center"/>
    <property type="evidence" value="ECO:0007669"/>
    <property type="project" value="InterPro"/>
</dbReference>
<dbReference type="GO" id="GO:0031676">
    <property type="term" value="C:plasma membrane-derived thylakoid membrane"/>
    <property type="evidence" value="ECO:0007669"/>
    <property type="project" value="UniProtKB-SubCell"/>
</dbReference>
<dbReference type="GO" id="GO:0009055">
    <property type="term" value="F:electron transfer activity"/>
    <property type="evidence" value="ECO:0007669"/>
    <property type="project" value="UniProtKB-UniRule"/>
</dbReference>
<dbReference type="GO" id="GO:0020037">
    <property type="term" value="F:heme binding"/>
    <property type="evidence" value="ECO:0007669"/>
    <property type="project" value="InterPro"/>
</dbReference>
<dbReference type="GO" id="GO:0005506">
    <property type="term" value="F:iron ion binding"/>
    <property type="evidence" value="ECO:0007669"/>
    <property type="project" value="UniProtKB-UniRule"/>
</dbReference>
<dbReference type="GO" id="GO:0009767">
    <property type="term" value="P:photosynthetic electron transport chain"/>
    <property type="evidence" value="ECO:0007669"/>
    <property type="project" value="InterPro"/>
</dbReference>
<dbReference type="Gene3D" id="1.20.5.860">
    <property type="entry name" value="Photosystem II cytochrome b559, alpha subunit"/>
    <property type="match status" value="1"/>
</dbReference>
<dbReference type="HAMAP" id="MF_00642">
    <property type="entry name" value="PSII_PsbE"/>
    <property type="match status" value="1"/>
</dbReference>
<dbReference type="InterPro" id="IPR006217">
    <property type="entry name" value="PSII_cyt_b559_asu"/>
</dbReference>
<dbReference type="InterPro" id="IPR037025">
    <property type="entry name" value="PSII_cyt_b559_asu_sf"/>
</dbReference>
<dbReference type="InterPro" id="IPR006216">
    <property type="entry name" value="PSII_cyt_b559_CS"/>
</dbReference>
<dbReference type="InterPro" id="IPR013081">
    <property type="entry name" value="PSII_cyt_b559_N"/>
</dbReference>
<dbReference type="InterPro" id="IPR013082">
    <property type="entry name" value="PSII_cytb559_asu_lum"/>
</dbReference>
<dbReference type="NCBIfam" id="TIGR01332">
    <property type="entry name" value="cyt_b559_alpha"/>
    <property type="match status" value="1"/>
</dbReference>
<dbReference type="PANTHER" id="PTHR33391">
    <property type="entry name" value="CYTOCHROME B559 SUBUNIT BETA-RELATED"/>
    <property type="match status" value="1"/>
</dbReference>
<dbReference type="PANTHER" id="PTHR33391:SF9">
    <property type="entry name" value="CYTOCHROME B559 SUBUNIT BETA-RELATED"/>
    <property type="match status" value="1"/>
</dbReference>
<dbReference type="Pfam" id="PF00283">
    <property type="entry name" value="Cytochrom_B559"/>
    <property type="match status" value="1"/>
</dbReference>
<dbReference type="Pfam" id="PF00284">
    <property type="entry name" value="Cytochrom_B559a"/>
    <property type="match status" value="1"/>
</dbReference>
<dbReference type="PIRSF" id="PIRSF000036">
    <property type="entry name" value="PsbE"/>
    <property type="match status" value="1"/>
</dbReference>
<dbReference type="SUPFAM" id="SSF161045">
    <property type="entry name" value="Cytochrome b559 subunits"/>
    <property type="match status" value="1"/>
</dbReference>
<dbReference type="PROSITE" id="PS00537">
    <property type="entry name" value="CYTOCHROME_B559"/>
    <property type="match status" value="1"/>
</dbReference>
<organism>
    <name type="scientific">Trichormus variabilis (strain ATCC 29413 / PCC 7937)</name>
    <name type="common">Anabaena variabilis</name>
    <dbReference type="NCBI Taxonomy" id="240292"/>
    <lineage>
        <taxon>Bacteria</taxon>
        <taxon>Bacillati</taxon>
        <taxon>Cyanobacteriota</taxon>
        <taxon>Cyanophyceae</taxon>
        <taxon>Nostocales</taxon>
        <taxon>Nostocaceae</taxon>
        <taxon>Trichormus</taxon>
    </lineage>
</organism>
<evidence type="ECO:0000255" key="1">
    <source>
        <dbReference type="HAMAP-Rule" id="MF_00642"/>
    </source>
</evidence>